<sequence>MPSFDIVSEVDLQEVRNAVENATRELASRWDFRNVEASVELNEKNETIKLTTISDFQVKQLVDILREKLVKRGIEAGALEIPEECEHSGKLYSVEAKLQKGIDSVMAKKLVKLIKDSKLKVQTQIQGEQLRVTGKSRDDLQGAMALVRGADLGQPFQFNNFRD</sequence>
<proteinExistence type="inferred from homology"/>
<reference key="1">
    <citation type="submission" date="2009-03" db="EMBL/GenBank/DDBJ databases">
        <title>Complete genome sequence of Edwardsiella ictaluri 93-146.</title>
        <authorList>
            <person name="Williams M.L."/>
            <person name="Gillaspy A.F."/>
            <person name="Dyer D.W."/>
            <person name="Thune R.L."/>
            <person name="Waldbieser G.C."/>
            <person name="Schuster S.C."/>
            <person name="Gipson J."/>
            <person name="Zaitshik J."/>
            <person name="Landry C."/>
            <person name="Lawrence M.L."/>
        </authorList>
    </citation>
    <scope>NUCLEOTIDE SEQUENCE [LARGE SCALE GENOMIC DNA]</scope>
    <source>
        <strain>93-146</strain>
    </source>
</reference>
<name>Y1072_EDWI9</name>
<protein>
    <recommendedName>
        <fullName evidence="1">Nucleotide-binding protein NT01EI_1072</fullName>
    </recommendedName>
</protein>
<evidence type="ECO:0000255" key="1">
    <source>
        <dbReference type="HAMAP-Rule" id="MF_00632"/>
    </source>
</evidence>
<accession>C5BCJ0</accession>
<gene>
    <name type="ordered locus">NT01EI_1072</name>
</gene>
<keyword id="KW-0547">Nucleotide-binding</keyword>
<organism>
    <name type="scientific">Edwardsiella ictaluri (strain 93-146)</name>
    <dbReference type="NCBI Taxonomy" id="634503"/>
    <lineage>
        <taxon>Bacteria</taxon>
        <taxon>Pseudomonadati</taxon>
        <taxon>Pseudomonadota</taxon>
        <taxon>Gammaproteobacteria</taxon>
        <taxon>Enterobacterales</taxon>
        <taxon>Hafniaceae</taxon>
        <taxon>Edwardsiella</taxon>
    </lineage>
</organism>
<comment type="function">
    <text evidence="1">Nucleotide-binding protein.</text>
</comment>
<comment type="similarity">
    <text evidence="1">Belongs to the YajQ family.</text>
</comment>
<feature type="chain" id="PRO_1000212333" description="Nucleotide-binding protein NT01EI_1072">
    <location>
        <begin position="1"/>
        <end position="163"/>
    </location>
</feature>
<dbReference type="EMBL" id="CP001600">
    <property type="protein sequence ID" value="ACR68284.1"/>
    <property type="molecule type" value="Genomic_DNA"/>
</dbReference>
<dbReference type="RefSeq" id="WP_015870465.1">
    <property type="nucleotide sequence ID" value="NZ_CP169062.1"/>
</dbReference>
<dbReference type="SMR" id="C5BCJ0"/>
<dbReference type="STRING" id="67780.B6E78_15730"/>
<dbReference type="KEGG" id="eic:NT01EI_1072"/>
<dbReference type="PATRIC" id="fig|634503.3.peg.971"/>
<dbReference type="HOGENOM" id="CLU_099839_1_0_6"/>
<dbReference type="OrthoDB" id="9801447at2"/>
<dbReference type="Proteomes" id="UP000001485">
    <property type="component" value="Chromosome"/>
</dbReference>
<dbReference type="GO" id="GO:0005829">
    <property type="term" value="C:cytosol"/>
    <property type="evidence" value="ECO:0007669"/>
    <property type="project" value="TreeGrafter"/>
</dbReference>
<dbReference type="GO" id="GO:0000166">
    <property type="term" value="F:nucleotide binding"/>
    <property type="evidence" value="ECO:0007669"/>
    <property type="project" value="TreeGrafter"/>
</dbReference>
<dbReference type="CDD" id="cd11740">
    <property type="entry name" value="YajQ_like"/>
    <property type="match status" value="1"/>
</dbReference>
<dbReference type="FunFam" id="3.30.70.860:FF:000001">
    <property type="entry name" value="UPF0234 protein YajQ"/>
    <property type="match status" value="1"/>
</dbReference>
<dbReference type="FunFam" id="3.30.70.990:FF:000001">
    <property type="entry name" value="UPF0234 protein YajQ"/>
    <property type="match status" value="1"/>
</dbReference>
<dbReference type="Gene3D" id="3.30.70.860">
    <property type="match status" value="1"/>
</dbReference>
<dbReference type="Gene3D" id="3.30.70.990">
    <property type="entry name" value="YajQ-like, domain 2"/>
    <property type="match status" value="1"/>
</dbReference>
<dbReference type="HAMAP" id="MF_00632">
    <property type="entry name" value="YajQ"/>
    <property type="match status" value="1"/>
</dbReference>
<dbReference type="InterPro" id="IPR007551">
    <property type="entry name" value="DUF520"/>
</dbReference>
<dbReference type="InterPro" id="IPR035571">
    <property type="entry name" value="UPF0234-like_C"/>
</dbReference>
<dbReference type="InterPro" id="IPR035570">
    <property type="entry name" value="UPF0234_N"/>
</dbReference>
<dbReference type="InterPro" id="IPR036183">
    <property type="entry name" value="YajQ-like_sf"/>
</dbReference>
<dbReference type="NCBIfam" id="NF003819">
    <property type="entry name" value="PRK05412.1"/>
    <property type="match status" value="1"/>
</dbReference>
<dbReference type="PANTHER" id="PTHR30476">
    <property type="entry name" value="UPF0234 PROTEIN YAJQ"/>
    <property type="match status" value="1"/>
</dbReference>
<dbReference type="PANTHER" id="PTHR30476:SF0">
    <property type="entry name" value="UPF0234 PROTEIN YAJQ"/>
    <property type="match status" value="1"/>
</dbReference>
<dbReference type="Pfam" id="PF04461">
    <property type="entry name" value="DUF520"/>
    <property type="match status" value="1"/>
</dbReference>
<dbReference type="SUPFAM" id="SSF89963">
    <property type="entry name" value="YajQ-like"/>
    <property type="match status" value="2"/>
</dbReference>